<keyword id="KW-0028">Amino-acid biosynthesis</keyword>
<keyword id="KW-0963">Cytoplasm</keyword>
<keyword id="KW-0368">Histidine biosynthesis</keyword>
<keyword id="KW-0413">Isomerase</keyword>
<evidence type="ECO:0000255" key="1">
    <source>
        <dbReference type="HAMAP-Rule" id="MF_01014"/>
    </source>
</evidence>
<reference key="1">
    <citation type="journal article" date="2008" name="BMC Genomics">
        <title>The genome of Aeromonas salmonicida subsp. salmonicida A449: insights into the evolution of a fish pathogen.</title>
        <authorList>
            <person name="Reith M.E."/>
            <person name="Singh R.K."/>
            <person name="Curtis B."/>
            <person name="Boyd J.M."/>
            <person name="Bouevitch A."/>
            <person name="Kimball J."/>
            <person name="Munholland J."/>
            <person name="Murphy C."/>
            <person name="Sarty D."/>
            <person name="Williams J."/>
            <person name="Nash J.H."/>
            <person name="Johnson S.C."/>
            <person name="Brown L.L."/>
        </authorList>
    </citation>
    <scope>NUCLEOTIDE SEQUENCE [LARGE SCALE GENOMIC DNA]</scope>
    <source>
        <strain>A449</strain>
    </source>
</reference>
<dbReference type="EC" id="5.3.1.16" evidence="1"/>
<dbReference type="EMBL" id="CP000644">
    <property type="protein sequence ID" value="ABO90172.1"/>
    <property type="molecule type" value="Genomic_DNA"/>
</dbReference>
<dbReference type="RefSeq" id="WP_005311379.1">
    <property type="nucleotide sequence ID" value="NC_009348.1"/>
</dbReference>
<dbReference type="SMR" id="A4SMQ0"/>
<dbReference type="STRING" id="29491.GCA_000820065_00716"/>
<dbReference type="GeneID" id="79879947"/>
<dbReference type="KEGG" id="asa:ASA_2106"/>
<dbReference type="eggNOG" id="COG0106">
    <property type="taxonomic scope" value="Bacteria"/>
</dbReference>
<dbReference type="HOGENOM" id="CLU_048577_1_2_6"/>
<dbReference type="UniPathway" id="UPA00031">
    <property type="reaction ID" value="UER00009"/>
</dbReference>
<dbReference type="Proteomes" id="UP000000225">
    <property type="component" value="Chromosome"/>
</dbReference>
<dbReference type="GO" id="GO:0005737">
    <property type="term" value="C:cytoplasm"/>
    <property type="evidence" value="ECO:0007669"/>
    <property type="project" value="UniProtKB-SubCell"/>
</dbReference>
<dbReference type="GO" id="GO:0003949">
    <property type="term" value="F:1-(5-phosphoribosyl)-5-[(5-phosphoribosylamino)methylideneamino]imidazole-4-carboxamide isomerase activity"/>
    <property type="evidence" value="ECO:0007669"/>
    <property type="project" value="UniProtKB-UniRule"/>
</dbReference>
<dbReference type="GO" id="GO:0000105">
    <property type="term" value="P:L-histidine biosynthetic process"/>
    <property type="evidence" value="ECO:0007669"/>
    <property type="project" value="UniProtKB-UniRule"/>
</dbReference>
<dbReference type="GO" id="GO:0000162">
    <property type="term" value="P:L-tryptophan biosynthetic process"/>
    <property type="evidence" value="ECO:0007669"/>
    <property type="project" value="TreeGrafter"/>
</dbReference>
<dbReference type="CDD" id="cd04732">
    <property type="entry name" value="HisA"/>
    <property type="match status" value="1"/>
</dbReference>
<dbReference type="FunFam" id="3.20.20.70:FF:000009">
    <property type="entry name" value="1-(5-phosphoribosyl)-5-[(5-phosphoribosylamino)methylideneamino] imidazole-4-carboxamide isomerase"/>
    <property type="match status" value="1"/>
</dbReference>
<dbReference type="Gene3D" id="3.20.20.70">
    <property type="entry name" value="Aldolase class I"/>
    <property type="match status" value="1"/>
</dbReference>
<dbReference type="HAMAP" id="MF_01014">
    <property type="entry name" value="HisA"/>
    <property type="match status" value="1"/>
</dbReference>
<dbReference type="InterPro" id="IPR013785">
    <property type="entry name" value="Aldolase_TIM"/>
</dbReference>
<dbReference type="InterPro" id="IPR006062">
    <property type="entry name" value="His_biosynth"/>
</dbReference>
<dbReference type="InterPro" id="IPR006063">
    <property type="entry name" value="HisA_bact_arch"/>
</dbReference>
<dbReference type="InterPro" id="IPR044524">
    <property type="entry name" value="Isoase_HisA-like"/>
</dbReference>
<dbReference type="InterPro" id="IPR023016">
    <property type="entry name" value="Isoase_HisA-like_bact"/>
</dbReference>
<dbReference type="InterPro" id="IPR011060">
    <property type="entry name" value="RibuloseP-bd_barrel"/>
</dbReference>
<dbReference type="NCBIfam" id="TIGR00007">
    <property type="entry name" value="1-(5-phosphoribosyl)-5-[(5-phosphoribosylamino)methylideneamino]imidazole-4-carboxamide isomerase"/>
    <property type="match status" value="1"/>
</dbReference>
<dbReference type="PANTHER" id="PTHR43090">
    <property type="entry name" value="1-(5-PHOSPHORIBOSYL)-5-[(5-PHOSPHORIBOSYLAMINO)METHYLIDENEAMINO] IMIDAZOLE-4-CARBOXAMIDE ISOMERASE"/>
    <property type="match status" value="1"/>
</dbReference>
<dbReference type="PANTHER" id="PTHR43090:SF2">
    <property type="entry name" value="1-(5-PHOSPHORIBOSYL)-5-[(5-PHOSPHORIBOSYLAMINO)METHYLIDENEAMINO] IMIDAZOLE-4-CARBOXAMIDE ISOMERASE"/>
    <property type="match status" value="1"/>
</dbReference>
<dbReference type="Pfam" id="PF00977">
    <property type="entry name" value="His_biosynth"/>
    <property type="match status" value="1"/>
</dbReference>
<dbReference type="SUPFAM" id="SSF51366">
    <property type="entry name" value="Ribulose-phoshate binding barrel"/>
    <property type="match status" value="1"/>
</dbReference>
<sequence length="248" mass="26264">MIIPAIDLINGQVVRLYQGDYDQKTEYSSSPQARFDEYVSQGAVQLHLVDLDGAKETQARQLPLLTQLLSATEAPVQVGGGVRTEQDVADLLAAGASRVVIGSTAVKSPDLVASWMEKYGPEQIVLALDVNIDAQGNRHIAVAGWQENSGVTIEALIERFLPAGLKHVLCTDISRDGTLSGTNVELYRDLCARYPSVGFQASGGIGGIADIEALKGTGVKGIILGRALLEGKFSVGDAIACWANGTQD</sequence>
<name>HIS4_AERS4</name>
<gene>
    <name evidence="1" type="primary">hisA</name>
    <name type="ordered locus">ASA_2106</name>
</gene>
<comment type="catalytic activity">
    <reaction evidence="1">
        <text>1-(5-phospho-beta-D-ribosyl)-5-[(5-phospho-beta-D-ribosylamino)methylideneamino]imidazole-4-carboxamide = 5-[(5-phospho-1-deoxy-D-ribulos-1-ylimino)methylamino]-1-(5-phospho-beta-D-ribosyl)imidazole-4-carboxamide</text>
        <dbReference type="Rhea" id="RHEA:15469"/>
        <dbReference type="ChEBI" id="CHEBI:58435"/>
        <dbReference type="ChEBI" id="CHEBI:58525"/>
        <dbReference type="EC" id="5.3.1.16"/>
    </reaction>
</comment>
<comment type="pathway">
    <text evidence="1">Amino-acid biosynthesis; L-histidine biosynthesis; L-histidine from 5-phospho-alpha-D-ribose 1-diphosphate: step 4/9.</text>
</comment>
<comment type="subcellular location">
    <subcellularLocation>
        <location evidence="1">Cytoplasm</location>
    </subcellularLocation>
</comment>
<comment type="similarity">
    <text evidence="1">Belongs to the HisA/HisF family.</text>
</comment>
<accession>A4SMQ0</accession>
<proteinExistence type="inferred from homology"/>
<organism>
    <name type="scientific">Aeromonas salmonicida (strain A449)</name>
    <dbReference type="NCBI Taxonomy" id="382245"/>
    <lineage>
        <taxon>Bacteria</taxon>
        <taxon>Pseudomonadati</taxon>
        <taxon>Pseudomonadota</taxon>
        <taxon>Gammaproteobacteria</taxon>
        <taxon>Aeromonadales</taxon>
        <taxon>Aeromonadaceae</taxon>
        <taxon>Aeromonas</taxon>
    </lineage>
</organism>
<protein>
    <recommendedName>
        <fullName evidence="1">1-(5-phosphoribosyl)-5-[(5-phosphoribosylamino)methylideneamino] imidazole-4-carboxamide isomerase</fullName>
        <ecNumber evidence="1">5.3.1.16</ecNumber>
    </recommendedName>
    <alternativeName>
        <fullName evidence="1">Phosphoribosylformimino-5-aminoimidazole carboxamide ribotide isomerase</fullName>
    </alternativeName>
</protein>
<feature type="chain" id="PRO_1000063180" description="1-(5-phosphoribosyl)-5-[(5-phosphoribosylamino)methylideneamino] imidazole-4-carboxamide isomerase">
    <location>
        <begin position="1"/>
        <end position="248"/>
    </location>
</feature>
<feature type="active site" description="Proton acceptor" evidence="1">
    <location>
        <position position="7"/>
    </location>
</feature>
<feature type="active site" description="Proton donor" evidence="1">
    <location>
        <position position="129"/>
    </location>
</feature>